<organism>
    <name type="scientific">Bacillus subtilis (strain 168)</name>
    <dbReference type="NCBI Taxonomy" id="224308"/>
    <lineage>
        <taxon>Bacteria</taxon>
        <taxon>Bacillati</taxon>
        <taxon>Bacillota</taxon>
        <taxon>Bacilli</taxon>
        <taxon>Bacillales</taxon>
        <taxon>Bacillaceae</taxon>
        <taxon>Bacillus</taxon>
    </lineage>
</organism>
<evidence type="ECO:0000255" key="1">
    <source>
        <dbReference type="HAMAP-Rule" id="MF_01935"/>
    </source>
</evidence>
<evidence type="ECO:0000305" key="2"/>
<name>MENF_BACSU</name>
<proteinExistence type="inferred from homology"/>
<sequence>MVTTVQRTFRKEVLHALHKAKEVNHAVLISYSRQIESLDPLSFFNYGAKKYTGNRFFWSDPESELTIVGLGKEAVFQTNQKNSERYREVFEQWERFKKTAFHIYEEEKLQHSAVGPVLFGGFSFDPCEERGSQWDHFSEGDFFVPALMLTMTAEGPFLTVNRWVSGGEDAEAVLEGLKAFAAEFMVPDFKQEDQAVIAAAEELDKDDWLKAIETATSQIKEKQYDKVVLARELLLTFDGPIQIEPVLKTLLDDQQTSYVFAIEQEGKTFVGASPERLIKRDGGTVMSSCLAGSIKRGVNEEDDRRIGLELLNDEKNLLEHDIVVGMIHNAFVSSCSEVEKPDGPVLYKTKSVQHLFTPIVGQLRESASIFDLIEKLHPTPALGGSPQEKAVDVIREIEPMSRGWYAAPIGWIDSQDNGEFAVAIRSGLIEGSTARLFAGCGIVEDSEPISEYEETQIKLKPMISALGGERR</sequence>
<gene>
    <name evidence="1" type="primary">menF</name>
    <name type="synonym">icsM</name>
    <name type="ordered locus">BSU30830</name>
</gene>
<dbReference type="EC" id="5.4.4.2" evidence="1"/>
<dbReference type="EMBL" id="M74521">
    <property type="protein sequence ID" value="AAA50396.1"/>
    <property type="status" value="ALT_SEQ"/>
    <property type="molecule type" value="Genomic_DNA"/>
</dbReference>
<dbReference type="EMBL" id="M74521">
    <property type="protein sequence ID" value="AAA50397.1"/>
    <property type="status" value="ALT_SEQ"/>
    <property type="molecule type" value="Genomic_DNA"/>
</dbReference>
<dbReference type="EMBL" id="M74538">
    <property type="protein sequence ID" value="AAC37013.1"/>
    <property type="molecule type" value="Genomic_DNA"/>
</dbReference>
<dbReference type="EMBL" id="AF008220">
    <property type="protein sequence ID" value="AAC00223.1"/>
    <property type="molecule type" value="Genomic_DNA"/>
</dbReference>
<dbReference type="EMBL" id="AL009126">
    <property type="protein sequence ID" value="CAB15061.1"/>
    <property type="molecule type" value="Genomic_DNA"/>
</dbReference>
<dbReference type="EMBL" id="M21320">
    <property type="protein sequence ID" value="AAA22594.1"/>
    <property type="molecule type" value="Genomic_DNA"/>
</dbReference>
<dbReference type="PIR" id="A69657">
    <property type="entry name" value="A69657"/>
</dbReference>
<dbReference type="RefSeq" id="NP_390961.1">
    <property type="nucleotide sequence ID" value="NC_000964.3"/>
</dbReference>
<dbReference type="RefSeq" id="WP_004398674.1">
    <property type="nucleotide sequence ID" value="NZ_OZ025638.1"/>
</dbReference>
<dbReference type="SMR" id="P23973"/>
<dbReference type="FunCoup" id="P23973">
    <property type="interactions" value="189"/>
</dbReference>
<dbReference type="STRING" id="224308.BSU30830"/>
<dbReference type="PaxDb" id="224308-BSU30830"/>
<dbReference type="EnsemblBacteria" id="CAB15061">
    <property type="protein sequence ID" value="CAB15061"/>
    <property type="gene ID" value="BSU_30830"/>
</dbReference>
<dbReference type="GeneID" id="937190"/>
<dbReference type="KEGG" id="bsu:BSU30830"/>
<dbReference type="PATRIC" id="fig|224308.179.peg.3341"/>
<dbReference type="eggNOG" id="COG1169">
    <property type="taxonomic scope" value="Bacteria"/>
</dbReference>
<dbReference type="InParanoid" id="P23973"/>
<dbReference type="OrthoDB" id="9803598at2"/>
<dbReference type="PhylomeDB" id="P23973"/>
<dbReference type="BioCyc" id="BSUB:BSU30830-MONOMER"/>
<dbReference type="BioCyc" id="MetaCyc:MONOMER-13806"/>
<dbReference type="UniPathway" id="UPA00079"/>
<dbReference type="UniPathway" id="UPA01057">
    <property type="reaction ID" value="UER00163"/>
</dbReference>
<dbReference type="Proteomes" id="UP000001570">
    <property type="component" value="Chromosome"/>
</dbReference>
<dbReference type="GO" id="GO:0008909">
    <property type="term" value="F:isochorismate synthase activity"/>
    <property type="evidence" value="ECO:0007669"/>
    <property type="project" value="UniProtKB-UniRule"/>
</dbReference>
<dbReference type="GO" id="GO:0000287">
    <property type="term" value="F:magnesium ion binding"/>
    <property type="evidence" value="ECO:0007669"/>
    <property type="project" value="UniProtKB-UniRule"/>
</dbReference>
<dbReference type="GO" id="GO:0009234">
    <property type="term" value="P:menaquinone biosynthetic process"/>
    <property type="evidence" value="ECO:0000317"/>
    <property type="project" value="UniProtKB"/>
</dbReference>
<dbReference type="Gene3D" id="3.60.120.10">
    <property type="entry name" value="Anthranilate synthase"/>
    <property type="match status" value="1"/>
</dbReference>
<dbReference type="HAMAP" id="MF_01935">
    <property type="entry name" value="MenF"/>
    <property type="match status" value="1"/>
</dbReference>
<dbReference type="InterPro" id="IPR005801">
    <property type="entry name" value="ADC_synthase"/>
</dbReference>
<dbReference type="InterPro" id="IPR015890">
    <property type="entry name" value="Chorismate_C"/>
</dbReference>
<dbReference type="InterPro" id="IPR004561">
    <property type="entry name" value="IsoChor_synthase"/>
</dbReference>
<dbReference type="InterPro" id="IPR034681">
    <property type="entry name" value="MenF"/>
</dbReference>
<dbReference type="NCBIfam" id="TIGR00543">
    <property type="entry name" value="isochor_syn"/>
    <property type="match status" value="1"/>
</dbReference>
<dbReference type="PANTHER" id="PTHR42839">
    <property type="entry name" value="ISOCHORISMATE SYNTHASE ENTC"/>
    <property type="match status" value="1"/>
</dbReference>
<dbReference type="PANTHER" id="PTHR42839:SF1">
    <property type="entry name" value="ISOCHORISMATE SYNTHASE MENF"/>
    <property type="match status" value="1"/>
</dbReference>
<dbReference type="Pfam" id="PF00425">
    <property type="entry name" value="Chorismate_bind"/>
    <property type="match status" value="1"/>
</dbReference>
<dbReference type="SUPFAM" id="SSF56322">
    <property type="entry name" value="ADC synthase"/>
    <property type="match status" value="1"/>
</dbReference>
<reference key="1">
    <citation type="journal article" date="1992" name="J. Bacteriol.">
        <title>Sequence organization and regulation of the Bacillus subtilis menBE operon.</title>
        <authorList>
            <person name="Driscoll J.R."/>
            <person name="Taber H.W."/>
        </authorList>
    </citation>
    <scope>PRELIMINARY NUCLEOTIDE SEQUENCE [GENOMIC DNA]</scope>
    <source>
        <strain>168 / RB1</strain>
    </source>
</reference>
<reference key="2">
    <citation type="journal article" date="1995" name="Gene">
        <title>Structural organization of a Bacillus subtilis operon encoding menaquinone biosynthetic enzymes.</title>
        <authorList>
            <person name="Rowland B."/>
            <person name="Hill K."/>
            <person name="Miller P."/>
            <person name="Driscoll J.R."/>
            <person name="Taber H.W."/>
        </authorList>
    </citation>
    <scope>NUCLEOTIDE SEQUENCE [GENOMIC DNA]</scope>
    <source>
        <strain>168 / RB1</strain>
    </source>
</reference>
<reference key="3">
    <citation type="journal article" date="1997" name="Microbiology">
        <title>Sequencing and functional annotation of the Bacillus subtilis genes in the 200 kb rrnB-dnaB region.</title>
        <authorList>
            <person name="Lapidus A."/>
            <person name="Galleron N."/>
            <person name="Sorokin A."/>
            <person name="Ehrlich S.D."/>
        </authorList>
    </citation>
    <scope>NUCLEOTIDE SEQUENCE [GENOMIC DNA]</scope>
    <source>
        <strain>168</strain>
    </source>
</reference>
<reference key="4">
    <citation type="journal article" date="1997" name="Nature">
        <title>The complete genome sequence of the Gram-positive bacterium Bacillus subtilis.</title>
        <authorList>
            <person name="Kunst F."/>
            <person name="Ogasawara N."/>
            <person name="Moszer I."/>
            <person name="Albertini A.M."/>
            <person name="Alloni G."/>
            <person name="Azevedo V."/>
            <person name="Bertero M.G."/>
            <person name="Bessieres P."/>
            <person name="Bolotin A."/>
            <person name="Borchert S."/>
            <person name="Borriss R."/>
            <person name="Boursier L."/>
            <person name="Brans A."/>
            <person name="Braun M."/>
            <person name="Brignell S.C."/>
            <person name="Bron S."/>
            <person name="Brouillet S."/>
            <person name="Bruschi C.V."/>
            <person name="Caldwell B."/>
            <person name="Capuano V."/>
            <person name="Carter N.M."/>
            <person name="Choi S.-K."/>
            <person name="Codani J.-J."/>
            <person name="Connerton I.F."/>
            <person name="Cummings N.J."/>
            <person name="Daniel R.A."/>
            <person name="Denizot F."/>
            <person name="Devine K.M."/>
            <person name="Duesterhoeft A."/>
            <person name="Ehrlich S.D."/>
            <person name="Emmerson P.T."/>
            <person name="Entian K.-D."/>
            <person name="Errington J."/>
            <person name="Fabret C."/>
            <person name="Ferrari E."/>
            <person name="Foulger D."/>
            <person name="Fritz C."/>
            <person name="Fujita M."/>
            <person name="Fujita Y."/>
            <person name="Fuma S."/>
            <person name="Galizzi A."/>
            <person name="Galleron N."/>
            <person name="Ghim S.-Y."/>
            <person name="Glaser P."/>
            <person name="Goffeau A."/>
            <person name="Golightly E.J."/>
            <person name="Grandi G."/>
            <person name="Guiseppi G."/>
            <person name="Guy B.J."/>
            <person name="Haga K."/>
            <person name="Haiech J."/>
            <person name="Harwood C.R."/>
            <person name="Henaut A."/>
            <person name="Hilbert H."/>
            <person name="Holsappel S."/>
            <person name="Hosono S."/>
            <person name="Hullo M.-F."/>
            <person name="Itaya M."/>
            <person name="Jones L.-M."/>
            <person name="Joris B."/>
            <person name="Karamata D."/>
            <person name="Kasahara Y."/>
            <person name="Klaerr-Blanchard M."/>
            <person name="Klein C."/>
            <person name="Kobayashi Y."/>
            <person name="Koetter P."/>
            <person name="Koningstein G."/>
            <person name="Krogh S."/>
            <person name="Kumano M."/>
            <person name="Kurita K."/>
            <person name="Lapidus A."/>
            <person name="Lardinois S."/>
            <person name="Lauber J."/>
            <person name="Lazarevic V."/>
            <person name="Lee S.-M."/>
            <person name="Levine A."/>
            <person name="Liu H."/>
            <person name="Masuda S."/>
            <person name="Mauel C."/>
            <person name="Medigue C."/>
            <person name="Medina N."/>
            <person name="Mellado R.P."/>
            <person name="Mizuno M."/>
            <person name="Moestl D."/>
            <person name="Nakai S."/>
            <person name="Noback M."/>
            <person name="Noone D."/>
            <person name="O'Reilly M."/>
            <person name="Ogawa K."/>
            <person name="Ogiwara A."/>
            <person name="Oudega B."/>
            <person name="Park S.-H."/>
            <person name="Parro V."/>
            <person name="Pohl T.M."/>
            <person name="Portetelle D."/>
            <person name="Porwollik S."/>
            <person name="Prescott A.M."/>
            <person name="Presecan E."/>
            <person name="Pujic P."/>
            <person name="Purnelle B."/>
            <person name="Rapoport G."/>
            <person name="Rey M."/>
            <person name="Reynolds S."/>
            <person name="Rieger M."/>
            <person name="Rivolta C."/>
            <person name="Rocha E."/>
            <person name="Roche B."/>
            <person name="Rose M."/>
            <person name="Sadaie Y."/>
            <person name="Sato T."/>
            <person name="Scanlan E."/>
            <person name="Schleich S."/>
            <person name="Schroeter R."/>
            <person name="Scoffone F."/>
            <person name="Sekiguchi J."/>
            <person name="Sekowska A."/>
            <person name="Seror S.J."/>
            <person name="Serror P."/>
            <person name="Shin B.-S."/>
            <person name="Soldo B."/>
            <person name="Sorokin A."/>
            <person name="Tacconi E."/>
            <person name="Takagi T."/>
            <person name="Takahashi H."/>
            <person name="Takemaru K."/>
            <person name="Takeuchi M."/>
            <person name="Tamakoshi A."/>
            <person name="Tanaka T."/>
            <person name="Terpstra P."/>
            <person name="Tognoni A."/>
            <person name="Tosato V."/>
            <person name="Uchiyama S."/>
            <person name="Vandenbol M."/>
            <person name="Vannier F."/>
            <person name="Vassarotti A."/>
            <person name="Viari A."/>
            <person name="Wambutt R."/>
            <person name="Wedler E."/>
            <person name="Wedler H."/>
            <person name="Weitzenegger T."/>
            <person name="Winters P."/>
            <person name="Wipat A."/>
            <person name="Yamamoto H."/>
            <person name="Yamane K."/>
            <person name="Yasumoto K."/>
            <person name="Yata K."/>
            <person name="Yoshida K."/>
            <person name="Yoshikawa H.-F."/>
            <person name="Zumstein E."/>
            <person name="Yoshikawa H."/>
            <person name="Danchin A."/>
        </authorList>
    </citation>
    <scope>NUCLEOTIDE SEQUENCE [LARGE SCALE GENOMIC DNA]</scope>
    <source>
        <strain>168</strain>
    </source>
</reference>
<reference key="5">
    <citation type="journal article" date="1988" name="J. Bacteriol.">
        <title>Transcriptional regulation of a promoter in the men gene cluster of Bacillus subtilis.</title>
        <authorList>
            <person name="Miller P."/>
            <person name="Mueller J."/>
            <person name="Hill K."/>
            <person name="Taber H.W."/>
        </authorList>
    </citation>
    <scope>NUCLEOTIDE SEQUENCE [GENOMIC DNA] OF 1-32</scope>
</reference>
<accession>P23973</accession>
<accession>P23972</accession>
<protein>
    <recommendedName>
        <fullName evidence="1">Isochorismate synthase MenF</fullName>
        <ecNumber evidence="1">5.4.4.2</ecNumber>
    </recommendedName>
    <alternativeName>
        <fullName evidence="1">Isochorismate mutase</fullName>
    </alternativeName>
</protein>
<feature type="chain" id="PRO_0000154150" description="Isochorismate synthase MenF">
    <location>
        <begin position="1"/>
        <end position="471"/>
    </location>
</feature>
<feature type="active site" description="Proton acceptor" evidence="1">
    <location>
        <position position="226"/>
    </location>
</feature>
<feature type="active site" description="Proton donor" evidence="1">
    <location>
        <position position="275"/>
    </location>
</feature>
<feature type="binding site" evidence="1">
    <location>
        <position position="319"/>
    </location>
    <ligand>
        <name>Mg(2+)</name>
        <dbReference type="ChEBI" id="CHEBI:18420"/>
    </ligand>
</feature>
<feature type="binding site" evidence="1">
    <location>
        <position position="454"/>
    </location>
    <ligand>
        <name>Mg(2+)</name>
        <dbReference type="ChEBI" id="CHEBI:18420"/>
    </ligand>
</feature>
<feature type="sequence conflict" description="In Ref. 5; AAA50396/AAA22594." evidence="2" ref="5">
    <original>E</original>
    <variation>K</variation>
    <location>
        <position position="12"/>
    </location>
</feature>
<keyword id="KW-0413">Isomerase</keyword>
<keyword id="KW-0460">Magnesium</keyword>
<keyword id="KW-0474">Menaquinone biosynthesis</keyword>
<keyword id="KW-0479">Metal-binding</keyword>
<keyword id="KW-1185">Reference proteome</keyword>
<comment type="function">
    <text evidence="1">Catalyzes the conversion of chorismate to isochorismate.</text>
</comment>
<comment type="catalytic activity">
    <reaction evidence="1">
        <text>chorismate = isochorismate</text>
        <dbReference type="Rhea" id="RHEA:18985"/>
        <dbReference type="ChEBI" id="CHEBI:29748"/>
        <dbReference type="ChEBI" id="CHEBI:29780"/>
        <dbReference type="EC" id="5.4.4.2"/>
    </reaction>
</comment>
<comment type="cofactor">
    <cofactor evidence="1">
        <name>Mg(2+)</name>
        <dbReference type="ChEBI" id="CHEBI:18420"/>
    </cofactor>
</comment>
<comment type="pathway">
    <text evidence="1">Quinol/quinone metabolism; 1,4-dihydroxy-2-naphthoate biosynthesis; 1,4-dihydroxy-2-naphthoate from chorismate: step 1/7.</text>
</comment>
<comment type="pathway">
    <text evidence="1">Quinol/quinone metabolism; menaquinone biosynthesis.</text>
</comment>
<comment type="similarity">
    <text evidence="1">Belongs to the isochorismate synthase family.</text>
</comment>
<comment type="caution">
    <text evidence="2">Used to include what was called 'menR'.</text>
</comment>